<feature type="chain" id="PRO_0000398058" description="Arginine biosynthesis bifunctional protein ArgJ alpha chain" evidence="1">
    <location>
        <begin position="1"/>
        <end position="214"/>
    </location>
</feature>
<feature type="chain" id="PRO_0000398059" description="Arginine biosynthesis bifunctional protein ArgJ beta chain" evidence="1">
    <location>
        <begin position="215"/>
        <end position="441"/>
    </location>
</feature>
<feature type="active site" description="Nucleophile" evidence="1">
    <location>
        <position position="215"/>
    </location>
</feature>
<feature type="binding site" evidence="1">
    <location>
        <position position="177"/>
    </location>
    <ligand>
        <name>substrate</name>
    </ligand>
</feature>
<feature type="binding site" evidence="1">
    <location>
        <position position="204"/>
    </location>
    <ligand>
        <name>substrate</name>
    </ligand>
</feature>
<feature type="binding site" evidence="1">
    <location>
        <position position="215"/>
    </location>
    <ligand>
        <name>substrate</name>
    </ligand>
</feature>
<feature type="binding site" evidence="1">
    <location>
        <position position="301"/>
    </location>
    <ligand>
        <name>substrate</name>
    </ligand>
</feature>
<feature type="binding site" evidence="1">
    <location>
        <position position="436"/>
    </location>
    <ligand>
        <name>substrate</name>
    </ligand>
</feature>
<feature type="binding site" evidence="1">
    <location>
        <position position="441"/>
    </location>
    <ligand>
        <name>substrate</name>
    </ligand>
</feature>
<feature type="site" description="Involved in the stabilization of negative charge on the oxyanion by the formation of the oxyanion hole" evidence="1">
    <location>
        <position position="136"/>
    </location>
</feature>
<feature type="site" description="Involved in the stabilization of negative charge on the oxyanion by the formation of the oxyanion hole" evidence="1">
    <location>
        <position position="137"/>
    </location>
</feature>
<feature type="site" description="Cleavage; by autolysis" evidence="1">
    <location>
        <begin position="214"/>
        <end position="215"/>
    </location>
</feature>
<reference key="1">
    <citation type="journal article" date="2009" name="Genome Res.">
        <title>Comparative genomics of protoploid Saccharomycetaceae.</title>
        <authorList>
            <consortium name="The Genolevures Consortium"/>
            <person name="Souciet J.-L."/>
            <person name="Dujon B."/>
            <person name="Gaillardin C."/>
            <person name="Johnston M."/>
            <person name="Baret P.V."/>
            <person name="Cliften P."/>
            <person name="Sherman D.J."/>
            <person name="Weissenbach J."/>
            <person name="Westhof E."/>
            <person name="Wincker P."/>
            <person name="Jubin C."/>
            <person name="Poulain J."/>
            <person name="Barbe V."/>
            <person name="Segurens B."/>
            <person name="Artiguenave F."/>
            <person name="Anthouard V."/>
            <person name="Vacherie B."/>
            <person name="Val M.-E."/>
            <person name="Fulton R.S."/>
            <person name="Minx P."/>
            <person name="Wilson R."/>
            <person name="Durrens P."/>
            <person name="Jean G."/>
            <person name="Marck C."/>
            <person name="Martin T."/>
            <person name="Nikolski M."/>
            <person name="Rolland T."/>
            <person name="Seret M.-L."/>
            <person name="Casaregola S."/>
            <person name="Despons L."/>
            <person name="Fairhead C."/>
            <person name="Fischer G."/>
            <person name="Lafontaine I."/>
            <person name="Leh V."/>
            <person name="Lemaire M."/>
            <person name="de Montigny J."/>
            <person name="Neuveglise C."/>
            <person name="Thierry A."/>
            <person name="Blanc-Lenfle I."/>
            <person name="Bleykasten C."/>
            <person name="Diffels J."/>
            <person name="Fritsch E."/>
            <person name="Frangeul L."/>
            <person name="Goeffon A."/>
            <person name="Jauniaux N."/>
            <person name="Kachouri-Lafond R."/>
            <person name="Payen C."/>
            <person name="Potier S."/>
            <person name="Pribylova L."/>
            <person name="Ozanne C."/>
            <person name="Richard G.-F."/>
            <person name="Sacerdot C."/>
            <person name="Straub M.-L."/>
            <person name="Talla E."/>
        </authorList>
    </citation>
    <scope>NUCLEOTIDE SEQUENCE [LARGE SCALE GENOMIC DNA]</scope>
    <source>
        <strain>ATCC 56472 / CBS 6340 / NRRL Y-8284</strain>
    </source>
</reference>
<name>ARGJ_LACTC</name>
<proteinExistence type="inferred from homology"/>
<gene>
    <name type="ordered locus">KLTH0B04488g</name>
</gene>
<keyword id="KW-0012">Acyltransferase</keyword>
<keyword id="KW-0028">Amino-acid biosynthesis</keyword>
<keyword id="KW-0055">Arginine biosynthesis</keyword>
<keyword id="KW-0068">Autocatalytic cleavage</keyword>
<keyword id="KW-0496">Mitochondrion</keyword>
<keyword id="KW-0511">Multifunctional enzyme</keyword>
<keyword id="KW-1185">Reference proteome</keyword>
<keyword id="KW-0808">Transferase</keyword>
<comment type="function">
    <text evidence="1">Catalyzes two activities which are involved in the cyclic version of arginine biosynthesis: the synthesis of acetylglutamate from glutamate and acetyl-CoA, and of ornithine by transacetylation between acetylornithine and glutamate.</text>
</comment>
<comment type="catalytic activity">
    <reaction evidence="1">
        <text>N(2)-acetyl-L-ornithine + L-glutamate = N-acetyl-L-glutamate + L-ornithine</text>
        <dbReference type="Rhea" id="RHEA:15349"/>
        <dbReference type="ChEBI" id="CHEBI:29985"/>
        <dbReference type="ChEBI" id="CHEBI:44337"/>
        <dbReference type="ChEBI" id="CHEBI:46911"/>
        <dbReference type="ChEBI" id="CHEBI:57805"/>
        <dbReference type="EC" id="2.3.1.35"/>
    </reaction>
</comment>
<comment type="catalytic activity">
    <reaction evidence="1">
        <text>L-glutamate + acetyl-CoA = N-acetyl-L-glutamate + CoA + H(+)</text>
        <dbReference type="Rhea" id="RHEA:24292"/>
        <dbReference type="ChEBI" id="CHEBI:15378"/>
        <dbReference type="ChEBI" id="CHEBI:29985"/>
        <dbReference type="ChEBI" id="CHEBI:44337"/>
        <dbReference type="ChEBI" id="CHEBI:57287"/>
        <dbReference type="ChEBI" id="CHEBI:57288"/>
        <dbReference type="EC" id="2.3.1.1"/>
    </reaction>
</comment>
<comment type="pathway">
    <text evidence="1">Amino-acid biosynthesis; L-arginine biosynthesis; L-ornithine and N-acetyl-L-glutamate from L-glutamate and N(2)-acetyl-L-ornithine (cyclic): step 1/1.</text>
</comment>
<comment type="pathway">
    <text evidence="1">Amino-acid biosynthesis; L-arginine biosynthesis; N(2)-acetyl-L-ornithine from L-glutamate: step 1/4.</text>
</comment>
<comment type="subunit">
    <text evidence="1">Heterodimer of an alpha and a beta chain.</text>
</comment>
<comment type="subcellular location">
    <subcellularLocation>
        <location evidence="1">Mitochondrion matrix</location>
    </subcellularLocation>
</comment>
<comment type="PTM">
    <text evidence="1">The alpha and beta chains are autoproteolytically processed from a single precursor protein within the mitochondrion.</text>
</comment>
<comment type="miscellaneous">
    <text evidence="1">This protein may be expected to contain an N-terminal transit peptide but none has been predicted.</text>
</comment>
<comment type="similarity">
    <text evidence="1">Belongs to the ArgJ family.</text>
</comment>
<evidence type="ECO:0000255" key="1">
    <source>
        <dbReference type="HAMAP-Rule" id="MF_03124"/>
    </source>
</evidence>
<dbReference type="EC" id="2.3.1.35" evidence="1"/>
<dbReference type="EC" id="2.3.1.1" evidence="1"/>
<dbReference type="EMBL" id="CU928166">
    <property type="protein sequence ID" value="CAR21544.1"/>
    <property type="molecule type" value="Genomic_DNA"/>
</dbReference>
<dbReference type="RefSeq" id="XP_002551982.1">
    <property type="nucleotide sequence ID" value="XM_002551936.1"/>
</dbReference>
<dbReference type="SMR" id="C5DCN3"/>
<dbReference type="FunCoup" id="C5DCN3">
    <property type="interactions" value="329"/>
</dbReference>
<dbReference type="STRING" id="559295.C5DCN3"/>
<dbReference type="MEROPS" id="T05.001"/>
<dbReference type="GeneID" id="8290819"/>
<dbReference type="KEGG" id="lth:KLTH0B04488g"/>
<dbReference type="eggNOG" id="KOG2786">
    <property type="taxonomic scope" value="Eukaryota"/>
</dbReference>
<dbReference type="HOGENOM" id="CLU_027172_1_0_1"/>
<dbReference type="InParanoid" id="C5DCN3"/>
<dbReference type="OMA" id="WGRIVMA"/>
<dbReference type="OrthoDB" id="2017946at2759"/>
<dbReference type="UniPathway" id="UPA00068">
    <property type="reaction ID" value="UER00106"/>
</dbReference>
<dbReference type="UniPathway" id="UPA00068">
    <property type="reaction ID" value="UER00111"/>
</dbReference>
<dbReference type="Proteomes" id="UP000002036">
    <property type="component" value="Chromosome B"/>
</dbReference>
<dbReference type="GO" id="GO:0005759">
    <property type="term" value="C:mitochondrial matrix"/>
    <property type="evidence" value="ECO:0007669"/>
    <property type="project" value="UniProtKB-SubCell"/>
</dbReference>
<dbReference type="GO" id="GO:0004358">
    <property type="term" value="F:glutamate N-acetyltransferase activity"/>
    <property type="evidence" value="ECO:0007669"/>
    <property type="project" value="UniProtKB-UniRule"/>
</dbReference>
<dbReference type="GO" id="GO:0004042">
    <property type="term" value="F:L-glutamate N-acetyltransferase activity"/>
    <property type="evidence" value="ECO:0007669"/>
    <property type="project" value="UniProtKB-UniRule"/>
</dbReference>
<dbReference type="GO" id="GO:0006526">
    <property type="term" value="P:L-arginine biosynthetic process"/>
    <property type="evidence" value="ECO:0007669"/>
    <property type="project" value="UniProtKB-UniRule"/>
</dbReference>
<dbReference type="GO" id="GO:0006592">
    <property type="term" value="P:ornithine biosynthetic process"/>
    <property type="evidence" value="ECO:0007669"/>
    <property type="project" value="TreeGrafter"/>
</dbReference>
<dbReference type="CDD" id="cd02152">
    <property type="entry name" value="OAT"/>
    <property type="match status" value="1"/>
</dbReference>
<dbReference type="FunFam" id="3.60.70.12:FF:000001">
    <property type="entry name" value="Arginine biosynthesis bifunctional protein ArgJ, chloroplastic"/>
    <property type="match status" value="1"/>
</dbReference>
<dbReference type="FunFam" id="3.10.20.340:FF:000002">
    <property type="entry name" value="Arginine biosynthesis bifunctional protein ArgJ, mitochondrial"/>
    <property type="match status" value="1"/>
</dbReference>
<dbReference type="FunFam" id="3.30.2330.10:FF:000001">
    <property type="entry name" value="Arginine biosynthesis bifunctional protein ArgJ, mitochondrial"/>
    <property type="match status" value="1"/>
</dbReference>
<dbReference type="Gene3D" id="3.30.2330.10">
    <property type="entry name" value="arginine biosynthesis bifunctional protein suprefamily"/>
    <property type="match status" value="1"/>
</dbReference>
<dbReference type="Gene3D" id="3.10.20.340">
    <property type="entry name" value="ArgJ beta chain, C-terminal domain"/>
    <property type="match status" value="1"/>
</dbReference>
<dbReference type="Gene3D" id="3.60.70.12">
    <property type="entry name" value="L-amino peptidase D-ALA esterase/amidase"/>
    <property type="match status" value="1"/>
</dbReference>
<dbReference type="HAMAP" id="MF_01106">
    <property type="entry name" value="ArgJ"/>
    <property type="match status" value="1"/>
</dbReference>
<dbReference type="InterPro" id="IPR002813">
    <property type="entry name" value="Arg_biosynth_ArgJ"/>
</dbReference>
<dbReference type="InterPro" id="IPR016117">
    <property type="entry name" value="ArgJ-like_dom_sf"/>
</dbReference>
<dbReference type="InterPro" id="IPR042195">
    <property type="entry name" value="ArgJ_beta_C"/>
</dbReference>
<dbReference type="NCBIfam" id="TIGR00120">
    <property type="entry name" value="ArgJ"/>
    <property type="match status" value="1"/>
</dbReference>
<dbReference type="NCBIfam" id="NF003802">
    <property type="entry name" value="PRK05388.1"/>
    <property type="match status" value="1"/>
</dbReference>
<dbReference type="PANTHER" id="PTHR23100">
    <property type="entry name" value="ARGININE BIOSYNTHESIS BIFUNCTIONAL PROTEIN ARGJ"/>
    <property type="match status" value="1"/>
</dbReference>
<dbReference type="PANTHER" id="PTHR23100:SF0">
    <property type="entry name" value="ARGININE BIOSYNTHESIS BIFUNCTIONAL PROTEIN ARGJ, MITOCHONDRIAL"/>
    <property type="match status" value="1"/>
</dbReference>
<dbReference type="Pfam" id="PF01960">
    <property type="entry name" value="ArgJ"/>
    <property type="match status" value="1"/>
</dbReference>
<dbReference type="SUPFAM" id="SSF56266">
    <property type="entry name" value="DmpA/ArgJ-like"/>
    <property type="match status" value="1"/>
</dbReference>
<protein>
    <recommendedName>
        <fullName evidence="1">Arginine biosynthesis bifunctional protein ArgJ, mitochondrial</fullName>
    </recommendedName>
    <domain>
        <recommendedName>
            <fullName evidence="1">Glutamate N-acetyltransferase</fullName>
            <shortName evidence="1">GAT</shortName>
            <ecNumber evidence="1">2.3.1.35</ecNumber>
        </recommendedName>
        <alternativeName>
            <fullName evidence="1">Ornithine acetyltransferase</fullName>
            <shortName evidence="1">OATase</shortName>
        </alternativeName>
        <alternativeName>
            <fullName evidence="1">Ornithine transacetylase</fullName>
        </alternativeName>
    </domain>
    <domain>
        <recommendedName>
            <fullName evidence="1">Amino-acid acetyltransferase</fullName>
            <ecNumber evidence="1">2.3.1.1</ecNumber>
        </recommendedName>
        <alternativeName>
            <fullName evidence="1">N-acetylglutamate synthase</fullName>
            <shortName evidence="1">AGS</shortName>
        </alternativeName>
    </domain>
    <component>
        <recommendedName>
            <fullName evidence="1">Arginine biosynthesis bifunctional protein ArgJ alpha chain</fullName>
        </recommendedName>
    </component>
    <component>
        <recommendedName>
            <fullName evidence="1">Arginine biosynthesis bifunctional protein ArgJ beta chain</fullName>
        </recommendedName>
    </component>
</protein>
<accession>C5DCN3</accession>
<organism>
    <name type="scientific">Lachancea thermotolerans (strain ATCC 56472 / CBS 6340 / NRRL Y-8284)</name>
    <name type="common">Yeast</name>
    <name type="synonym">Kluyveromyces thermotolerans</name>
    <dbReference type="NCBI Taxonomy" id="559295"/>
    <lineage>
        <taxon>Eukaryota</taxon>
        <taxon>Fungi</taxon>
        <taxon>Dikarya</taxon>
        <taxon>Ascomycota</taxon>
        <taxon>Saccharomycotina</taxon>
        <taxon>Saccharomycetes</taxon>
        <taxon>Saccharomycetales</taxon>
        <taxon>Saccharomycetaceae</taxon>
        <taxon>Lachancea</taxon>
    </lineage>
</organism>
<sequence>MRVSSALLQKAAKTVDKYSLYVPKSGVFPKGFKVASLASGVKKNGNRDLGIILNTNKSRPSNAAAVFTTNRFKAAPVLVSKQVLDGSSGEGVNAIVANSGCANAVTGELGMQDAQKVAGQVNAHIGKENSTLVMSTGVIGQRLQMDKISKGINTLFDQKQFGSDFNSWLNLAKSICTTDTFPKLISSKFQLSDGTEYTLTGISKGAGMICPNMATLLGFIVTDLPIKASTLQAMLTAAVNRSFNCISVDGDMSTNDTICMLANGAVDTFVIDEASPDFEQVKSQVTEFAKQLAQLVVRDGEGATKFVTVNVKNSANFKDARIIAETISNSMLVKSALYGQDANWGRILCAIGYSKLENLASLDESKINVSFIATDNSSPRELKLIANGVPQFDIDENRASEILALPDLEILVDMGTGSEECQFWTCDLSHEYVTINGDYRS</sequence>